<gene>
    <name evidence="1" type="primary">mutL</name>
    <name type="ordered locus">Swoo_4172</name>
</gene>
<protein>
    <recommendedName>
        <fullName evidence="1">DNA mismatch repair protein MutL</fullName>
    </recommendedName>
</protein>
<name>MUTL_SHEWM</name>
<comment type="function">
    <text evidence="1">This protein is involved in the repair of mismatches in DNA. It is required for dam-dependent methyl-directed DNA mismatch repair. May act as a 'molecular matchmaker', a protein that promotes the formation of a stable complex between two or more DNA-binding proteins in an ATP-dependent manner without itself being part of a final effector complex.</text>
</comment>
<comment type="similarity">
    <text evidence="1">Belongs to the DNA mismatch repair MutL/HexB family.</text>
</comment>
<keyword id="KW-0227">DNA damage</keyword>
<keyword id="KW-0234">DNA repair</keyword>
<keyword id="KW-1185">Reference proteome</keyword>
<sequence length="614" mass="68598">MTIQILSPQLANQIAAGEVVERPASVIKELVENSLDAGATRVDIEIDKGGSKLIKIQDNGSGIPKSELNLALSRHATSKLSTLDDLDAILSFGFRGEALASISSVSRLTLTSRTAEQTEAWQAYAEGSDMAVKVIPAAHPVGTTIEAVDLFFNTPARRRFLKSDKTEFTHIDEWLKRIALVKPEIHFTLKHNGKQVRNYRPANNQDQYLMRLAQICGKNFAEQAIEIDCQHEGLTLSGYIQSPFFTSPASDTQFFYVNGRLIRDRLVNHAVRQAFSEHGTGELASYVLMLEIAPHQVDVNVHPAKHEVRFHQSRYVHDYILQALQSALMQVARASISLPEEKLVEFVEDDWHSKPLSTGRVSEADPSNYATQSKFDEKPRESGSQGQSSSISAPSSYSRGGEYSARSQPELPSASEIASYTQLLKTPQTAQASKLVNSDLKTPMPPVLAGQYWVYAGDELSLLPIDIVAKWLVKRDILAKIDNGLVSQPLLMPVSIKVDEDWLNTIDEREQLLRQLGIEITIRLGQLIIKKVPPYLRQSQLVTVIPELLQWVRFEEPTHEALALWLAKQDDGKFESAVATWSAFSQLDDEIQQELAQKAKVLPWQSWLEEQLSD</sequence>
<organism>
    <name type="scientific">Shewanella woodyi (strain ATCC 51908 / MS32)</name>
    <dbReference type="NCBI Taxonomy" id="392500"/>
    <lineage>
        <taxon>Bacteria</taxon>
        <taxon>Pseudomonadati</taxon>
        <taxon>Pseudomonadota</taxon>
        <taxon>Gammaproteobacteria</taxon>
        <taxon>Alteromonadales</taxon>
        <taxon>Shewanellaceae</taxon>
        <taxon>Shewanella</taxon>
    </lineage>
</organism>
<evidence type="ECO:0000255" key="1">
    <source>
        <dbReference type="HAMAP-Rule" id="MF_00149"/>
    </source>
</evidence>
<evidence type="ECO:0000256" key="2">
    <source>
        <dbReference type="SAM" id="MobiDB-lite"/>
    </source>
</evidence>
<dbReference type="EMBL" id="CP000961">
    <property type="protein sequence ID" value="ACA88428.1"/>
    <property type="molecule type" value="Genomic_DNA"/>
</dbReference>
<dbReference type="RefSeq" id="WP_012326757.1">
    <property type="nucleotide sequence ID" value="NC_010506.1"/>
</dbReference>
<dbReference type="SMR" id="B1KHV0"/>
<dbReference type="STRING" id="392500.Swoo_4172"/>
<dbReference type="KEGG" id="swd:Swoo_4172"/>
<dbReference type="eggNOG" id="COG0323">
    <property type="taxonomic scope" value="Bacteria"/>
</dbReference>
<dbReference type="HOGENOM" id="CLU_004131_5_1_6"/>
<dbReference type="Proteomes" id="UP000002168">
    <property type="component" value="Chromosome"/>
</dbReference>
<dbReference type="GO" id="GO:0032300">
    <property type="term" value="C:mismatch repair complex"/>
    <property type="evidence" value="ECO:0007669"/>
    <property type="project" value="InterPro"/>
</dbReference>
<dbReference type="GO" id="GO:0005524">
    <property type="term" value="F:ATP binding"/>
    <property type="evidence" value="ECO:0007669"/>
    <property type="project" value="InterPro"/>
</dbReference>
<dbReference type="GO" id="GO:0016887">
    <property type="term" value="F:ATP hydrolysis activity"/>
    <property type="evidence" value="ECO:0007669"/>
    <property type="project" value="InterPro"/>
</dbReference>
<dbReference type="GO" id="GO:0140664">
    <property type="term" value="F:ATP-dependent DNA damage sensor activity"/>
    <property type="evidence" value="ECO:0007669"/>
    <property type="project" value="InterPro"/>
</dbReference>
<dbReference type="GO" id="GO:0030983">
    <property type="term" value="F:mismatched DNA binding"/>
    <property type="evidence" value="ECO:0007669"/>
    <property type="project" value="InterPro"/>
</dbReference>
<dbReference type="GO" id="GO:0006298">
    <property type="term" value="P:mismatch repair"/>
    <property type="evidence" value="ECO:0007669"/>
    <property type="project" value="UniProtKB-UniRule"/>
</dbReference>
<dbReference type="CDD" id="cd16926">
    <property type="entry name" value="HATPase_MutL-MLH-PMS-like"/>
    <property type="match status" value="1"/>
</dbReference>
<dbReference type="CDD" id="cd03482">
    <property type="entry name" value="MutL_Trans_MutL"/>
    <property type="match status" value="1"/>
</dbReference>
<dbReference type="FunFam" id="3.30.565.10:FF:000003">
    <property type="entry name" value="DNA mismatch repair endonuclease MutL"/>
    <property type="match status" value="1"/>
</dbReference>
<dbReference type="Gene3D" id="3.30.230.10">
    <property type="match status" value="1"/>
</dbReference>
<dbReference type="Gene3D" id="3.30.565.10">
    <property type="entry name" value="Histidine kinase-like ATPase, C-terminal domain"/>
    <property type="match status" value="1"/>
</dbReference>
<dbReference type="Gene3D" id="3.30.1540.20">
    <property type="entry name" value="MutL, C-terminal domain, dimerisation subdomain"/>
    <property type="match status" value="1"/>
</dbReference>
<dbReference type="Gene3D" id="3.30.1370.100">
    <property type="entry name" value="MutL, C-terminal domain, regulatory subdomain"/>
    <property type="match status" value="1"/>
</dbReference>
<dbReference type="HAMAP" id="MF_00149">
    <property type="entry name" value="DNA_mis_repair"/>
    <property type="match status" value="1"/>
</dbReference>
<dbReference type="InterPro" id="IPR014762">
    <property type="entry name" value="DNA_mismatch_repair_CS"/>
</dbReference>
<dbReference type="InterPro" id="IPR020667">
    <property type="entry name" value="DNA_mismatch_repair_MutL"/>
</dbReference>
<dbReference type="InterPro" id="IPR013507">
    <property type="entry name" value="DNA_mismatch_S5_2-like"/>
</dbReference>
<dbReference type="InterPro" id="IPR036890">
    <property type="entry name" value="HATPase_C_sf"/>
</dbReference>
<dbReference type="InterPro" id="IPR002099">
    <property type="entry name" value="MutL/Mlh/PMS"/>
</dbReference>
<dbReference type="InterPro" id="IPR038973">
    <property type="entry name" value="MutL/Mlh/Pms-like"/>
</dbReference>
<dbReference type="InterPro" id="IPR014790">
    <property type="entry name" value="MutL_C"/>
</dbReference>
<dbReference type="InterPro" id="IPR042120">
    <property type="entry name" value="MutL_C_dimsub"/>
</dbReference>
<dbReference type="InterPro" id="IPR042121">
    <property type="entry name" value="MutL_C_regsub"/>
</dbReference>
<dbReference type="InterPro" id="IPR037198">
    <property type="entry name" value="MutL_C_sf"/>
</dbReference>
<dbReference type="InterPro" id="IPR020568">
    <property type="entry name" value="Ribosomal_Su5_D2-typ_SF"/>
</dbReference>
<dbReference type="InterPro" id="IPR014721">
    <property type="entry name" value="Ribsml_uS5_D2-typ_fold_subgr"/>
</dbReference>
<dbReference type="NCBIfam" id="TIGR00585">
    <property type="entry name" value="mutl"/>
    <property type="match status" value="1"/>
</dbReference>
<dbReference type="NCBIfam" id="NF000948">
    <property type="entry name" value="PRK00095.1-1"/>
    <property type="match status" value="1"/>
</dbReference>
<dbReference type="PANTHER" id="PTHR10073">
    <property type="entry name" value="DNA MISMATCH REPAIR PROTEIN MLH, PMS, MUTL"/>
    <property type="match status" value="1"/>
</dbReference>
<dbReference type="PANTHER" id="PTHR10073:SF12">
    <property type="entry name" value="DNA MISMATCH REPAIR PROTEIN MLH1"/>
    <property type="match status" value="1"/>
</dbReference>
<dbReference type="Pfam" id="PF01119">
    <property type="entry name" value="DNA_mis_repair"/>
    <property type="match status" value="1"/>
</dbReference>
<dbReference type="Pfam" id="PF13589">
    <property type="entry name" value="HATPase_c_3"/>
    <property type="match status" value="1"/>
</dbReference>
<dbReference type="Pfam" id="PF08676">
    <property type="entry name" value="MutL_C"/>
    <property type="match status" value="1"/>
</dbReference>
<dbReference type="SMART" id="SM01340">
    <property type="entry name" value="DNA_mis_repair"/>
    <property type="match status" value="1"/>
</dbReference>
<dbReference type="SMART" id="SM00853">
    <property type="entry name" value="MutL_C"/>
    <property type="match status" value="1"/>
</dbReference>
<dbReference type="SUPFAM" id="SSF55874">
    <property type="entry name" value="ATPase domain of HSP90 chaperone/DNA topoisomerase II/histidine kinase"/>
    <property type="match status" value="1"/>
</dbReference>
<dbReference type="SUPFAM" id="SSF118116">
    <property type="entry name" value="DNA mismatch repair protein MutL"/>
    <property type="match status" value="1"/>
</dbReference>
<dbReference type="SUPFAM" id="SSF54211">
    <property type="entry name" value="Ribosomal protein S5 domain 2-like"/>
    <property type="match status" value="1"/>
</dbReference>
<dbReference type="PROSITE" id="PS00058">
    <property type="entry name" value="DNA_MISMATCH_REPAIR_1"/>
    <property type="match status" value="1"/>
</dbReference>
<reference key="1">
    <citation type="submission" date="2008-02" db="EMBL/GenBank/DDBJ databases">
        <title>Complete sequence of Shewanella woodyi ATCC 51908.</title>
        <authorList>
            <consortium name="US DOE Joint Genome Institute"/>
            <person name="Copeland A."/>
            <person name="Lucas S."/>
            <person name="Lapidus A."/>
            <person name="Glavina del Rio T."/>
            <person name="Dalin E."/>
            <person name="Tice H."/>
            <person name="Bruce D."/>
            <person name="Goodwin L."/>
            <person name="Pitluck S."/>
            <person name="Sims D."/>
            <person name="Brettin T."/>
            <person name="Detter J.C."/>
            <person name="Han C."/>
            <person name="Kuske C.R."/>
            <person name="Schmutz J."/>
            <person name="Larimer F."/>
            <person name="Land M."/>
            <person name="Hauser L."/>
            <person name="Kyrpides N."/>
            <person name="Lykidis A."/>
            <person name="Zhao J.-S."/>
            <person name="Richardson P."/>
        </authorList>
    </citation>
    <scope>NUCLEOTIDE SEQUENCE [LARGE SCALE GENOMIC DNA]</scope>
    <source>
        <strain>ATCC 51908 / MS32</strain>
    </source>
</reference>
<feature type="chain" id="PRO_1000096687" description="DNA mismatch repair protein MutL">
    <location>
        <begin position="1"/>
        <end position="614"/>
    </location>
</feature>
<feature type="region of interest" description="Disordered" evidence="2">
    <location>
        <begin position="355"/>
        <end position="411"/>
    </location>
</feature>
<feature type="compositionally biased region" description="Low complexity" evidence="2">
    <location>
        <begin position="382"/>
        <end position="401"/>
    </location>
</feature>
<proteinExistence type="inferred from homology"/>
<accession>B1KHV0</accession>